<proteinExistence type="evidence at transcript level"/>
<dbReference type="EMBL" id="CR858552">
    <property type="protein sequence ID" value="CAH90779.1"/>
    <property type="molecule type" value="mRNA"/>
</dbReference>
<dbReference type="EMBL" id="CR858953">
    <property type="protein sequence ID" value="CAH91151.1"/>
    <property type="molecule type" value="mRNA"/>
</dbReference>
<dbReference type="EMBL" id="CR859592">
    <property type="protein sequence ID" value="CAH91755.1"/>
    <property type="molecule type" value="mRNA"/>
</dbReference>
<dbReference type="RefSeq" id="NP_001127333.1">
    <property type="nucleotide sequence ID" value="NM_001133861.2"/>
</dbReference>
<dbReference type="RefSeq" id="XP_009233358.1">
    <property type="nucleotide sequence ID" value="XM_009235083.4"/>
</dbReference>
<dbReference type="RefSeq" id="XP_009233359.1">
    <property type="nucleotide sequence ID" value="XM_009235084.4"/>
</dbReference>
<dbReference type="RefSeq" id="XP_009233360.1">
    <property type="nucleotide sequence ID" value="XM_009235085.3"/>
</dbReference>
<dbReference type="RefSeq" id="XP_009233361.1">
    <property type="nucleotide sequence ID" value="XM_009235086.3"/>
</dbReference>
<dbReference type="RefSeq" id="XP_024097418.1">
    <property type="nucleotide sequence ID" value="XM_024241650.2"/>
</dbReference>
<dbReference type="RefSeq" id="XP_024097419.1">
    <property type="nucleotide sequence ID" value="XM_024241651.3"/>
</dbReference>
<dbReference type="RefSeq" id="XP_054400068.1">
    <property type="nucleotide sequence ID" value="XM_054544093.2"/>
</dbReference>
<dbReference type="RefSeq" id="XP_054400069.1">
    <property type="nucleotide sequence ID" value="XM_054544094.2"/>
</dbReference>
<dbReference type="RefSeq" id="XP_054400070.1">
    <property type="nucleotide sequence ID" value="XM_054544095.2"/>
</dbReference>
<dbReference type="RefSeq" id="XP_054400071.1">
    <property type="nucleotide sequence ID" value="XM_054544096.2"/>
</dbReference>
<dbReference type="RefSeq" id="XP_054400072.1">
    <property type="nucleotide sequence ID" value="XM_054544097.2"/>
</dbReference>
<dbReference type="RefSeq" id="XP_054400073.1">
    <property type="nucleotide sequence ID" value="XM_054544098.2"/>
</dbReference>
<dbReference type="RefSeq" id="XP_054400074.1">
    <property type="nucleotide sequence ID" value="XM_054544099.2"/>
</dbReference>
<dbReference type="SMR" id="Q5R905"/>
<dbReference type="FunCoup" id="Q5R905">
    <property type="interactions" value="1499"/>
</dbReference>
<dbReference type="STRING" id="9601.ENSPPYP00000023042"/>
<dbReference type="Ensembl" id="ENSPPYT00000024012.2">
    <property type="protein sequence ID" value="ENSPPYP00000023042.1"/>
    <property type="gene ID" value="ENSPPYG00000020587.2"/>
</dbReference>
<dbReference type="Ensembl" id="ENSPPYT00000036537.1">
    <property type="protein sequence ID" value="ENSPPYP00000036595.1"/>
    <property type="gene ID" value="ENSPPYG00000020587.2"/>
</dbReference>
<dbReference type="Ensembl" id="ENSPPYT00000039348.1">
    <property type="protein sequence ID" value="ENSPPYP00000032647.1"/>
    <property type="gene ID" value="ENSPPYG00000020587.2"/>
</dbReference>
<dbReference type="Ensembl" id="ENSPPYT00000050185.1">
    <property type="protein sequence ID" value="ENSPPYP00000043455.1"/>
    <property type="gene ID" value="ENSPPYG00000020587.2"/>
</dbReference>
<dbReference type="GeneID" id="100174394"/>
<dbReference type="KEGG" id="pon:100174394"/>
<dbReference type="CTD" id="9643"/>
<dbReference type="eggNOG" id="KOG3001">
    <property type="taxonomic scope" value="Eukaryota"/>
</dbReference>
<dbReference type="GeneTree" id="ENSGT00950000182965"/>
<dbReference type="HOGENOM" id="CLU_039566_4_0_1"/>
<dbReference type="InParanoid" id="Q5R905"/>
<dbReference type="OMA" id="PTRGNMQ"/>
<dbReference type="OrthoDB" id="124855at2759"/>
<dbReference type="TreeFam" id="TF323400"/>
<dbReference type="Proteomes" id="UP000001595">
    <property type="component" value="Unplaced"/>
</dbReference>
<dbReference type="GO" id="GO:0035267">
    <property type="term" value="C:NuA4 histone acetyltransferase complex"/>
    <property type="evidence" value="ECO:0007669"/>
    <property type="project" value="Ensembl"/>
</dbReference>
<dbReference type="GO" id="GO:0005730">
    <property type="term" value="C:nucleolus"/>
    <property type="evidence" value="ECO:0007669"/>
    <property type="project" value="Ensembl"/>
</dbReference>
<dbReference type="GO" id="GO:0005654">
    <property type="term" value="C:nucleoplasm"/>
    <property type="evidence" value="ECO:0007669"/>
    <property type="project" value="Ensembl"/>
</dbReference>
<dbReference type="GO" id="GO:0000786">
    <property type="term" value="C:nucleosome"/>
    <property type="evidence" value="ECO:0007669"/>
    <property type="project" value="Ensembl"/>
</dbReference>
<dbReference type="GO" id="GO:0005886">
    <property type="term" value="C:plasma membrane"/>
    <property type="evidence" value="ECO:0007669"/>
    <property type="project" value="Ensembl"/>
</dbReference>
<dbReference type="GO" id="GO:0006325">
    <property type="term" value="P:chromatin organization"/>
    <property type="evidence" value="ECO:0007669"/>
    <property type="project" value="UniProtKB-KW"/>
</dbReference>
<dbReference type="GO" id="GO:0006281">
    <property type="term" value="P:DNA repair"/>
    <property type="evidence" value="ECO:0007669"/>
    <property type="project" value="UniProtKB-KW"/>
</dbReference>
<dbReference type="GO" id="GO:1905168">
    <property type="term" value="P:positive regulation of double-strand break repair via homologous recombination"/>
    <property type="evidence" value="ECO:0007669"/>
    <property type="project" value="Ensembl"/>
</dbReference>
<dbReference type="GO" id="GO:0051726">
    <property type="term" value="P:regulation of cell cycle"/>
    <property type="evidence" value="ECO:0007669"/>
    <property type="project" value="Ensembl"/>
</dbReference>
<dbReference type="GO" id="GO:0006355">
    <property type="term" value="P:regulation of DNA-templated transcription"/>
    <property type="evidence" value="ECO:0007669"/>
    <property type="project" value="InterPro"/>
</dbReference>
<dbReference type="FunFam" id="1.10.274.30:FF:000001">
    <property type="entry name" value="Mortality factor 4-like protein 1"/>
    <property type="match status" value="1"/>
</dbReference>
<dbReference type="Gene3D" id="1.10.274.30">
    <property type="entry name" value="MRG domain"/>
    <property type="match status" value="1"/>
</dbReference>
<dbReference type="InterPro" id="IPR008676">
    <property type="entry name" value="MRG"/>
</dbReference>
<dbReference type="InterPro" id="IPR038217">
    <property type="entry name" value="MRG_C_sf"/>
</dbReference>
<dbReference type="InterPro" id="IPR026541">
    <property type="entry name" value="MRG_dom"/>
</dbReference>
<dbReference type="PANTHER" id="PTHR10880">
    <property type="entry name" value="MORTALITY FACTOR 4-LIKE PROTEIN"/>
    <property type="match status" value="1"/>
</dbReference>
<dbReference type="PANTHER" id="PTHR10880:SF25">
    <property type="entry name" value="MORTALITY FACTOR 4-LIKE PROTEIN 2"/>
    <property type="match status" value="1"/>
</dbReference>
<dbReference type="Pfam" id="PF05712">
    <property type="entry name" value="MRG"/>
    <property type="match status" value="1"/>
</dbReference>
<dbReference type="PROSITE" id="PS51640">
    <property type="entry name" value="MRG"/>
    <property type="match status" value="1"/>
</dbReference>
<feature type="chain" id="PRO_0000247603" description="Mortality factor 4-like protein 2">
    <location>
        <begin position="1"/>
        <end position="288"/>
    </location>
</feature>
<feature type="domain" description="MRG" evidence="3">
    <location>
        <begin position="117"/>
        <end position="288"/>
    </location>
</feature>
<feature type="region of interest" description="Disordered" evidence="4">
    <location>
        <begin position="1"/>
        <end position="113"/>
    </location>
</feature>
<feature type="compositionally biased region" description="Polar residues" evidence="4">
    <location>
        <begin position="1"/>
        <end position="15"/>
    </location>
</feature>
<feature type="modified residue" description="Phosphoserine" evidence="2">
    <location>
        <position position="71"/>
    </location>
</feature>
<feature type="sequence conflict" description="In Ref. 1; CAH91151." evidence="5" ref="1">
    <original>V</original>
    <variation>A</variation>
    <location>
        <position position="155"/>
    </location>
</feature>
<name>MO4L2_PONAB</name>
<reference key="1">
    <citation type="submission" date="2004-11" db="EMBL/GenBank/DDBJ databases">
        <authorList>
            <consortium name="The German cDNA consortium"/>
        </authorList>
    </citation>
    <scope>NUCLEOTIDE SEQUENCE [LARGE SCALE MRNA]</scope>
    <source>
        <tissue>Heart</tissue>
        <tissue>Kidney</tissue>
    </source>
</reference>
<protein>
    <recommendedName>
        <fullName>Mortality factor 4-like protein 2</fullName>
    </recommendedName>
</protein>
<accession>Q5R905</accession>
<accession>Q5RAQ9</accession>
<evidence type="ECO:0000250" key="1"/>
<evidence type="ECO:0000250" key="2">
    <source>
        <dbReference type="UniProtKB" id="Q15014"/>
    </source>
</evidence>
<evidence type="ECO:0000255" key="3">
    <source>
        <dbReference type="PROSITE-ProRule" id="PRU00972"/>
    </source>
</evidence>
<evidence type="ECO:0000256" key="4">
    <source>
        <dbReference type="SAM" id="MobiDB-lite"/>
    </source>
</evidence>
<evidence type="ECO:0000305" key="5"/>
<keyword id="KW-0156">Chromatin regulator</keyword>
<keyword id="KW-0227">DNA damage</keyword>
<keyword id="KW-0234">DNA repair</keyword>
<keyword id="KW-0341">Growth regulation</keyword>
<keyword id="KW-0539">Nucleus</keyword>
<keyword id="KW-0597">Phosphoprotein</keyword>
<keyword id="KW-1185">Reference proteome</keyword>
<keyword id="KW-0804">Transcription</keyword>
<keyword id="KW-0805">Transcription regulation</keyword>
<organism>
    <name type="scientific">Pongo abelii</name>
    <name type="common">Sumatran orangutan</name>
    <name type="synonym">Pongo pygmaeus abelii</name>
    <dbReference type="NCBI Taxonomy" id="9601"/>
    <lineage>
        <taxon>Eukaryota</taxon>
        <taxon>Metazoa</taxon>
        <taxon>Chordata</taxon>
        <taxon>Craniata</taxon>
        <taxon>Vertebrata</taxon>
        <taxon>Euteleostomi</taxon>
        <taxon>Mammalia</taxon>
        <taxon>Eutheria</taxon>
        <taxon>Euarchontoglires</taxon>
        <taxon>Primates</taxon>
        <taxon>Haplorrhini</taxon>
        <taxon>Catarrhini</taxon>
        <taxon>Hominidae</taxon>
        <taxon>Pongo</taxon>
    </lineage>
</organism>
<gene>
    <name type="primary">MORF4L2</name>
</gene>
<sequence length="288" mass="32308">MSSRKQGSQPRGQQSAEEENFKKPTRSNMQRSKMRGASSGKKTAGPQQKNLEPALPGRWGGRSAENPPSGSVRKTRKNKQKTPGNGDGGSTSEAPQPPRKKRARADPTVESEEAFKNRMEVKVKIPEELKPWLVEDWDLVTRQKQLFQLPAKKNVDAILEEYANCKKSQGNVDNKEYAVNEVVAGIKEYFNVMLGTQLLYKFERPQYAEILLAHPDAPMSQVYGAPHLLRLFVRIGAMLAYTPLDEKSLALLLGYLHDFLKYLAKNSASLFTASDYKVASAEYHRKAL</sequence>
<comment type="function">
    <text evidence="1">Component of the NuA4 histone acetyltransferase complex which is involved in transcriptional activation of select genes principally by acetylation of nucleosomal histone H4 and H2A. This modification may both alter nucleosome - DNA interactions and promote interaction of the modified histones with other proteins which positively regulate transcription. This complex may be required for the activation of transcriptional programs associated with oncogene and proto-oncogene mediated growth induction, tumor suppressor mediated growth arrest and replicative senescence, apoptosis, and DNA repair. The NuA4 complex ATPase and helicase activities seem to be, at least in part, contributed by the association of RUVBL1 and RUVBL2 with EP400. NuA4 may also play a direct role in DNA repair when directly recruited to sites of DNA damage. Also a component of the MSIN3A complex which acts to repress transcription by deacetylation of nucleosomal histones (By similarity).</text>
</comment>
<comment type="subunit">
    <text evidence="1">Component of the NuA4 histone acetyltransferase complex which contains the catalytic subunit KAT5/TIP60 and the subunits EP400, TRRAP/PAF400, BRD8/SMAP, EPC1, DMAP1/DNMAP1, RUVBL1/TIP49, RUVBL2, ING3, actin, ACTL6A/BAF53A, MORF4L1/MRG15, MORF4L2/MRGX, MRGBP, YEATS4/GAS41 and VPS72/YL1. The NuA4 complex interacts with MYC and the adenovirus E1A protein. MORF4L1 may also participate in the formation of NuA4 related complexes which lack the KAT5/TIP60 catalytic subunit, but which include the SWI/SNF related protein SRCAP. Component of the MSIN3A histone deacetylase complex, which includes SIN3A, HDAC2, ARID4B, MORF4L1, RBBP4/RbAp48, and RBBP7/RbAp46. Interacts with MRFAP1 and RB1. May also interact with one or more as yet undefined members of the TLE (transducin-like enhancer of split) family of transcriptional repressors (By similarity).</text>
</comment>
<comment type="subcellular location">
    <subcellularLocation>
        <location evidence="3">Nucleus</location>
    </subcellularLocation>
</comment>